<comment type="function">
    <text evidence="1">Catalyzes the anti-1,4-elimination of the C-3 phosphate and the C-6 proR hydrogen from 5-enolpyruvylshikimate-3-phosphate (EPSP) to yield chorismate, which is the branch point compound that serves as the starting substrate for the three terminal pathways of aromatic amino acid biosynthesis. This reaction introduces a second double bond into the aromatic ring system.</text>
</comment>
<comment type="catalytic activity">
    <reaction evidence="1">
        <text>5-O-(1-carboxyvinyl)-3-phosphoshikimate = chorismate + phosphate</text>
        <dbReference type="Rhea" id="RHEA:21020"/>
        <dbReference type="ChEBI" id="CHEBI:29748"/>
        <dbReference type="ChEBI" id="CHEBI:43474"/>
        <dbReference type="ChEBI" id="CHEBI:57701"/>
        <dbReference type="EC" id="4.2.3.5"/>
    </reaction>
</comment>
<comment type="cofactor">
    <cofactor evidence="1">
        <name>FMNH2</name>
        <dbReference type="ChEBI" id="CHEBI:57618"/>
    </cofactor>
    <text evidence="1">Reduced FMN (FMNH(2)).</text>
</comment>
<comment type="pathway">
    <text evidence="1">Metabolic intermediate biosynthesis; chorismate biosynthesis; chorismate from D-erythrose 4-phosphate and phosphoenolpyruvate: step 7/7.</text>
</comment>
<comment type="subunit">
    <text evidence="1">Homotetramer.</text>
</comment>
<comment type="similarity">
    <text evidence="1">Belongs to the chorismate synthase family.</text>
</comment>
<dbReference type="EC" id="4.2.3.5" evidence="1"/>
<dbReference type="EMBL" id="CP000961">
    <property type="protein sequence ID" value="ACA87288.1"/>
    <property type="molecule type" value="Genomic_DNA"/>
</dbReference>
<dbReference type="RefSeq" id="WP_012325624.1">
    <property type="nucleotide sequence ID" value="NC_010506.1"/>
</dbReference>
<dbReference type="SMR" id="B1KKS1"/>
<dbReference type="STRING" id="392500.Swoo_3017"/>
<dbReference type="KEGG" id="swd:Swoo_3017"/>
<dbReference type="eggNOG" id="COG0082">
    <property type="taxonomic scope" value="Bacteria"/>
</dbReference>
<dbReference type="HOGENOM" id="CLU_034547_0_2_6"/>
<dbReference type="UniPathway" id="UPA00053">
    <property type="reaction ID" value="UER00090"/>
</dbReference>
<dbReference type="Proteomes" id="UP000002168">
    <property type="component" value="Chromosome"/>
</dbReference>
<dbReference type="GO" id="GO:0005829">
    <property type="term" value="C:cytosol"/>
    <property type="evidence" value="ECO:0007669"/>
    <property type="project" value="TreeGrafter"/>
</dbReference>
<dbReference type="GO" id="GO:0004107">
    <property type="term" value="F:chorismate synthase activity"/>
    <property type="evidence" value="ECO:0007669"/>
    <property type="project" value="UniProtKB-UniRule"/>
</dbReference>
<dbReference type="GO" id="GO:0010181">
    <property type="term" value="F:FMN binding"/>
    <property type="evidence" value="ECO:0007669"/>
    <property type="project" value="TreeGrafter"/>
</dbReference>
<dbReference type="GO" id="GO:0008652">
    <property type="term" value="P:amino acid biosynthetic process"/>
    <property type="evidence" value="ECO:0007669"/>
    <property type="project" value="UniProtKB-KW"/>
</dbReference>
<dbReference type="GO" id="GO:0009073">
    <property type="term" value="P:aromatic amino acid family biosynthetic process"/>
    <property type="evidence" value="ECO:0007669"/>
    <property type="project" value="UniProtKB-KW"/>
</dbReference>
<dbReference type="GO" id="GO:0009423">
    <property type="term" value="P:chorismate biosynthetic process"/>
    <property type="evidence" value="ECO:0007669"/>
    <property type="project" value="UniProtKB-UniRule"/>
</dbReference>
<dbReference type="CDD" id="cd07304">
    <property type="entry name" value="Chorismate_synthase"/>
    <property type="match status" value="1"/>
</dbReference>
<dbReference type="FunFam" id="3.60.150.10:FF:000001">
    <property type="entry name" value="Chorismate synthase"/>
    <property type="match status" value="1"/>
</dbReference>
<dbReference type="Gene3D" id="3.60.150.10">
    <property type="entry name" value="Chorismate synthase AroC"/>
    <property type="match status" value="1"/>
</dbReference>
<dbReference type="HAMAP" id="MF_00300">
    <property type="entry name" value="Chorismate_synth"/>
    <property type="match status" value="1"/>
</dbReference>
<dbReference type="InterPro" id="IPR000453">
    <property type="entry name" value="Chorismate_synth"/>
</dbReference>
<dbReference type="InterPro" id="IPR035904">
    <property type="entry name" value="Chorismate_synth_AroC_sf"/>
</dbReference>
<dbReference type="InterPro" id="IPR020541">
    <property type="entry name" value="Chorismate_synthase_CS"/>
</dbReference>
<dbReference type="NCBIfam" id="TIGR00033">
    <property type="entry name" value="aroC"/>
    <property type="match status" value="1"/>
</dbReference>
<dbReference type="NCBIfam" id="NF003793">
    <property type="entry name" value="PRK05382.1"/>
    <property type="match status" value="1"/>
</dbReference>
<dbReference type="PANTHER" id="PTHR21085">
    <property type="entry name" value="CHORISMATE SYNTHASE"/>
    <property type="match status" value="1"/>
</dbReference>
<dbReference type="PANTHER" id="PTHR21085:SF0">
    <property type="entry name" value="CHORISMATE SYNTHASE"/>
    <property type="match status" value="1"/>
</dbReference>
<dbReference type="Pfam" id="PF01264">
    <property type="entry name" value="Chorismate_synt"/>
    <property type="match status" value="1"/>
</dbReference>
<dbReference type="PIRSF" id="PIRSF001456">
    <property type="entry name" value="Chorismate_synth"/>
    <property type="match status" value="1"/>
</dbReference>
<dbReference type="SUPFAM" id="SSF103263">
    <property type="entry name" value="Chorismate synthase, AroC"/>
    <property type="match status" value="1"/>
</dbReference>
<dbReference type="PROSITE" id="PS00787">
    <property type="entry name" value="CHORISMATE_SYNTHASE_1"/>
    <property type="match status" value="1"/>
</dbReference>
<dbReference type="PROSITE" id="PS00788">
    <property type="entry name" value="CHORISMATE_SYNTHASE_2"/>
    <property type="match status" value="1"/>
</dbReference>
<dbReference type="PROSITE" id="PS00789">
    <property type="entry name" value="CHORISMATE_SYNTHASE_3"/>
    <property type="match status" value="1"/>
</dbReference>
<accession>B1KKS1</accession>
<reference key="1">
    <citation type="submission" date="2008-02" db="EMBL/GenBank/DDBJ databases">
        <title>Complete sequence of Shewanella woodyi ATCC 51908.</title>
        <authorList>
            <consortium name="US DOE Joint Genome Institute"/>
            <person name="Copeland A."/>
            <person name="Lucas S."/>
            <person name="Lapidus A."/>
            <person name="Glavina del Rio T."/>
            <person name="Dalin E."/>
            <person name="Tice H."/>
            <person name="Bruce D."/>
            <person name="Goodwin L."/>
            <person name="Pitluck S."/>
            <person name="Sims D."/>
            <person name="Brettin T."/>
            <person name="Detter J.C."/>
            <person name="Han C."/>
            <person name="Kuske C.R."/>
            <person name="Schmutz J."/>
            <person name="Larimer F."/>
            <person name="Land M."/>
            <person name="Hauser L."/>
            <person name="Kyrpides N."/>
            <person name="Lykidis A."/>
            <person name="Zhao J.-S."/>
            <person name="Richardson P."/>
        </authorList>
    </citation>
    <scope>NUCLEOTIDE SEQUENCE [LARGE SCALE GENOMIC DNA]</scope>
    <source>
        <strain>ATCC 51908 / MS32</strain>
    </source>
</reference>
<organism>
    <name type="scientific">Shewanella woodyi (strain ATCC 51908 / MS32)</name>
    <dbReference type="NCBI Taxonomy" id="392500"/>
    <lineage>
        <taxon>Bacteria</taxon>
        <taxon>Pseudomonadati</taxon>
        <taxon>Pseudomonadota</taxon>
        <taxon>Gammaproteobacteria</taxon>
        <taxon>Alteromonadales</taxon>
        <taxon>Shewanellaceae</taxon>
        <taxon>Shewanella</taxon>
    </lineage>
</organism>
<proteinExistence type="inferred from homology"/>
<evidence type="ECO:0000255" key="1">
    <source>
        <dbReference type="HAMAP-Rule" id="MF_00300"/>
    </source>
</evidence>
<name>AROC_SHEWM</name>
<protein>
    <recommendedName>
        <fullName evidence="1">Chorismate synthase</fullName>
        <shortName evidence="1">CS</shortName>
        <ecNumber evidence="1">4.2.3.5</ecNumber>
    </recommendedName>
    <alternativeName>
        <fullName evidence="1">5-enolpyruvylshikimate-3-phosphate phospholyase</fullName>
    </alternativeName>
</protein>
<gene>
    <name evidence="1" type="primary">aroC</name>
    <name type="ordered locus">Swoo_3017</name>
</gene>
<feature type="chain" id="PRO_1000115399" description="Chorismate synthase">
    <location>
        <begin position="1"/>
        <end position="364"/>
    </location>
</feature>
<feature type="binding site" evidence="1">
    <location>
        <position position="48"/>
    </location>
    <ligand>
        <name>NADP(+)</name>
        <dbReference type="ChEBI" id="CHEBI:58349"/>
    </ligand>
</feature>
<feature type="binding site" evidence="1">
    <location>
        <position position="54"/>
    </location>
    <ligand>
        <name>NADP(+)</name>
        <dbReference type="ChEBI" id="CHEBI:58349"/>
    </ligand>
</feature>
<feature type="binding site" evidence="1">
    <location>
        <begin position="125"/>
        <end position="127"/>
    </location>
    <ligand>
        <name>FMN</name>
        <dbReference type="ChEBI" id="CHEBI:58210"/>
    </ligand>
</feature>
<feature type="binding site" evidence="1">
    <location>
        <begin position="238"/>
        <end position="239"/>
    </location>
    <ligand>
        <name>FMN</name>
        <dbReference type="ChEBI" id="CHEBI:58210"/>
    </ligand>
</feature>
<feature type="binding site" evidence="1">
    <location>
        <position position="278"/>
    </location>
    <ligand>
        <name>FMN</name>
        <dbReference type="ChEBI" id="CHEBI:58210"/>
    </ligand>
</feature>
<feature type="binding site" evidence="1">
    <location>
        <begin position="293"/>
        <end position="297"/>
    </location>
    <ligand>
        <name>FMN</name>
        <dbReference type="ChEBI" id="CHEBI:58210"/>
    </ligand>
</feature>
<feature type="binding site" evidence="1">
    <location>
        <position position="319"/>
    </location>
    <ligand>
        <name>FMN</name>
        <dbReference type="ChEBI" id="CHEBI:58210"/>
    </ligand>
</feature>
<sequence>MSGNSIGQNFVVTTFGESHGVALGCIIDGCPPGLELNEADMQHDLDRRRPGTSRYTTARREPDEVRVLSGIFEGKTTGTSIGLMIENTDQRSKDYSNIKDLFRPGHADYTYQQKYGLRDYRGGGRSSARETAMRVAAGAVAKKYLKQVHGIEINGFLSQLGPIKAEALDFSQIEQNAFFFPDPSKLDELDEYMRDLKKSGDSVGAKVSVVATGVPVGLGEPVFDRLDADIAHALMGINAVKGVEIGDGFEVVTQKGSEHRDLMSPEGFASNHAGGILGGISSGQPIVAHIAMKPTSSISIPGESITAQGEIAEVVTKGRHDPCVGIRAVPIAEAMLAIVLMDHLLRHRAQNMDVNSQTPTIGMR</sequence>
<keyword id="KW-0028">Amino-acid biosynthesis</keyword>
<keyword id="KW-0057">Aromatic amino acid biosynthesis</keyword>
<keyword id="KW-0274">FAD</keyword>
<keyword id="KW-0285">Flavoprotein</keyword>
<keyword id="KW-0288">FMN</keyword>
<keyword id="KW-0456">Lyase</keyword>
<keyword id="KW-0521">NADP</keyword>
<keyword id="KW-1185">Reference proteome</keyword>